<sequence>MQLNELNCVILCGGKSSRMGQDKSKLILKNQNLTQFQVDKFSKIFKNVYVSAKEDKFENHFSLIKDSLEFEVYSPMLALYSILSNFKNEFVFVLSVDSPKVGENELLKMLPFLEQNYKIIIAKTPLHKHPLCGFYHSSLAQTCKNFLEKNEQKIGLLFSEIKTKFVEFEDEDAFLNLNFYEEYEKFKSKLK</sequence>
<accession>Q5HT61</accession>
<name>MOBA_CAMJR</name>
<reference key="1">
    <citation type="journal article" date="2005" name="PLoS Biol.">
        <title>Major structural differences and novel potential virulence mechanisms from the genomes of multiple Campylobacter species.</title>
        <authorList>
            <person name="Fouts D.E."/>
            <person name="Mongodin E.F."/>
            <person name="Mandrell R.E."/>
            <person name="Miller W.G."/>
            <person name="Rasko D.A."/>
            <person name="Ravel J."/>
            <person name="Brinkac L.M."/>
            <person name="DeBoy R.T."/>
            <person name="Parker C.T."/>
            <person name="Daugherty S.C."/>
            <person name="Dodson R.J."/>
            <person name="Durkin A.S."/>
            <person name="Madupu R."/>
            <person name="Sullivan S.A."/>
            <person name="Shetty J.U."/>
            <person name="Ayodeji M.A."/>
            <person name="Shvartsbeyn A."/>
            <person name="Schatz M.C."/>
            <person name="Badger J.H."/>
            <person name="Fraser C.M."/>
            <person name="Nelson K.E."/>
        </authorList>
    </citation>
    <scope>NUCLEOTIDE SEQUENCE [LARGE SCALE GENOMIC DNA]</scope>
    <source>
        <strain>RM1221</strain>
    </source>
</reference>
<protein>
    <recommendedName>
        <fullName evidence="1">Molybdenum cofactor guanylyltransferase</fullName>
        <shortName evidence="1">MoCo guanylyltransferase</shortName>
        <ecNumber evidence="1">2.7.7.77</ecNumber>
    </recommendedName>
    <alternativeName>
        <fullName evidence="1">GTP:molybdopterin guanylyltransferase</fullName>
    </alternativeName>
    <alternativeName>
        <fullName evidence="1">Mo-MPT guanylyltransferase</fullName>
    </alternativeName>
    <alternativeName>
        <fullName evidence="1">Molybdopterin guanylyltransferase</fullName>
    </alternativeName>
    <alternativeName>
        <fullName evidence="1">Molybdopterin-guanine dinucleotide synthase</fullName>
        <shortName evidence="1">MGD synthase</shortName>
    </alternativeName>
</protein>
<organism>
    <name type="scientific">Campylobacter jejuni (strain RM1221)</name>
    <dbReference type="NCBI Taxonomy" id="195099"/>
    <lineage>
        <taxon>Bacteria</taxon>
        <taxon>Pseudomonadati</taxon>
        <taxon>Campylobacterota</taxon>
        <taxon>Epsilonproteobacteria</taxon>
        <taxon>Campylobacterales</taxon>
        <taxon>Campylobacteraceae</taxon>
        <taxon>Campylobacter</taxon>
    </lineage>
</organism>
<dbReference type="EC" id="2.7.7.77" evidence="1"/>
<dbReference type="EMBL" id="CP000025">
    <property type="protein sequence ID" value="AAW35976.1"/>
    <property type="molecule type" value="Genomic_DNA"/>
</dbReference>
<dbReference type="RefSeq" id="WP_002867312.1">
    <property type="nucleotide sequence ID" value="NC_003912.7"/>
</dbReference>
<dbReference type="SMR" id="Q5HT61"/>
<dbReference type="KEGG" id="cjr:CJE1539"/>
<dbReference type="HOGENOM" id="CLU_055597_2_2_7"/>
<dbReference type="GO" id="GO:0005737">
    <property type="term" value="C:cytoplasm"/>
    <property type="evidence" value="ECO:0007669"/>
    <property type="project" value="UniProtKB-SubCell"/>
</dbReference>
<dbReference type="GO" id="GO:0005525">
    <property type="term" value="F:GTP binding"/>
    <property type="evidence" value="ECO:0007669"/>
    <property type="project" value="UniProtKB-UniRule"/>
</dbReference>
<dbReference type="GO" id="GO:0046872">
    <property type="term" value="F:metal ion binding"/>
    <property type="evidence" value="ECO:0007669"/>
    <property type="project" value="UniProtKB-KW"/>
</dbReference>
<dbReference type="GO" id="GO:0061603">
    <property type="term" value="F:molybdenum cofactor guanylyltransferase activity"/>
    <property type="evidence" value="ECO:0007669"/>
    <property type="project" value="UniProtKB-EC"/>
</dbReference>
<dbReference type="GO" id="GO:1902758">
    <property type="term" value="P:bis(molybdopterin guanine dinucleotide)molybdenum biosynthetic process"/>
    <property type="evidence" value="ECO:0007669"/>
    <property type="project" value="TreeGrafter"/>
</dbReference>
<dbReference type="CDD" id="cd02503">
    <property type="entry name" value="MobA"/>
    <property type="match status" value="1"/>
</dbReference>
<dbReference type="FunFam" id="3.90.550.10:FF:000199">
    <property type="entry name" value="Molybdenum cofactor guanylyltransferase"/>
    <property type="match status" value="1"/>
</dbReference>
<dbReference type="Gene3D" id="3.90.550.10">
    <property type="entry name" value="Spore Coat Polysaccharide Biosynthesis Protein SpsA, Chain A"/>
    <property type="match status" value="1"/>
</dbReference>
<dbReference type="HAMAP" id="MF_00316">
    <property type="entry name" value="MobA"/>
    <property type="match status" value="1"/>
</dbReference>
<dbReference type="InterPro" id="IPR025877">
    <property type="entry name" value="MobA-like_NTP_Trfase"/>
</dbReference>
<dbReference type="InterPro" id="IPR013482">
    <property type="entry name" value="Molybde_CF_guanTrfase"/>
</dbReference>
<dbReference type="InterPro" id="IPR029044">
    <property type="entry name" value="Nucleotide-diphossugar_trans"/>
</dbReference>
<dbReference type="PANTHER" id="PTHR19136">
    <property type="entry name" value="MOLYBDENUM COFACTOR GUANYLYLTRANSFERASE"/>
    <property type="match status" value="1"/>
</dbReference>
<dbReference type="PANTHER" id="PTHR19136:SF81">
    <property type="entry name" value="MOLYBDENUM COFACTOR GUANYLYLTRANSFERASE"/>
    <property type="match status" value="1"/>
</dbReference>
<dbReference type="Pfam" id="PF12804">
    <property type="entry name" value="NTP_transf_3"/>
    <property type="match status" value="1"/>
</dbReference>
<dbReference type="SUPFAM" id="SSF53448">
    <property type="entry name" value="Nucleotide-diphospho-sugar transferases"/>
    <property type="match status" value="1"/>
</dbReference>
<evidence type="ECO:0000255" key="1">
    <source>
        <dbReference type="HAMAP-Rule" id="MF_00316"/>
    </source>
</evidence>
<keyword id="KW-0963">Cytoplasm</keyword>
<keyword id="KW-0342">GTP-binding</keyword>
<keyword id="KW-0460">Magnesium</keyword>
<keyword id="KW-0479">Metal-binding</keyword>
<keyword id="KW-0501">Molybdenum cofactor biosynthesis</keyword>
<keyword id="KW-0547">Nucleotide-binding</keyword>
<keyword id="KW-0808">Transferase</keyword>
<gene>
    <name evidence="1" type="primary">mobA</name>
    <name type="ordered locus">CJE1539</name>
</gene>
<proteinExistence type="inferred from homology"/>
<comment type="function">
    <text evidence="1">Transfers a GMP moiety from GTP to Mo-molybdopterin (Mo-MPT) cofactor (Moco or molybdenum cofactor) to form Mo-molybdopterin guanine dinucleotide (Mo-MGD) cofactor.</text>
</comment>
<comment type="catalytic activity">
    <reaction evidence="1">
        <text>Mo-molybdopterin + GTP + H(+) = Mo-molybdopterin guanine dinucleotide + diphosphate</text>
        <dbReference type="Rhea" id="RHEA:34243"/>
        <dbReference type="ChEBI" id="CHEBI:15378"/>
        <dbReference type="ChEBI" id="CHEBI:33019"/>
        <dbReference type="ChEBI" id="CHEBI:37565"/>
        <dbReference type="ChEBI" id="CHEBI:71302"/>
        <dbReference type="ChEBI" id="CHEBI:71310"/>
        <dbReference type="EC" id="2.7.7.77"/>
    </reaction>
</comment>
<comment type="cofactor">
    <cofactor evidence="1">
        <name>Mg(2+)</name>
        <dbReference type="ChEBI" id="CHEBI:18420"/>
    </cofactor>
</comment>
<comment type="subunit">
    <text evidence="1">Monomer.</text>
</comment>
<comment type="subcellular location">
    <subcellularLocation>
        <location evidence="1">Cytoplasm</location>
    </subcellularLocation>
</comment>
<comment type="domain">
    <text evidence="1">The N-terminal domain determines nucleotide recognition and specific binding, while the C-terminal domain determines the specific binding to the target protein.</text>
</comment>
<comment type="similarity">
    <text evidence="1">Belongs to the MobA family.</text>
</comment>
<feature type="chain" id="PRO_1000019115" description="Molybdenum cofactor guanylyltransferase">
    <location>
        <begin position="1"/>
        <end position="191"/>
    </location>
</feature>
<feature type="binding site" evidence="1">
    <location>
        <begin position="11"/>
        <end position="13"/>
    </location>
    <ligand>
        <name>GTP</name>
        <dbReference type="ChEBI" id="CHEBI:37565"/>
    </ligand>
</feature>
<feature type="binding site" evidence="1">
    <location>
        <position position="23"/>
    </location>
    <ligand>
        <name>GTP</name>
        <dbReference type="ChEBI" id="CHEBI:37565"/>
    </ligand>
</feature>
<feature type="binding site" evidence="1">
    <location>
        <position position="66"/>
    </location>
    <ligand>
        <name>GTP</name>
        <dbReference type="ChEBI" id="CHEBI:37565"/>
    </ligand>
</feature>
<feature type="binding site" evidence="1">
    <location>
        <position position="97"/>
    </location>
    <ligand>
        <name>GTP</name>
        <dbReference type="ChEBI" id="CHEBI:37565"/>
    </ligand>
</feature>
<feature type="binding site" evidence="1">
    <location>
        <position position="97"/>
    </location>
    <ligand>
        <name>Mg(2+)</name>
        <dbReference type="ChEBI" id="CHEBI:18420"/>
    </ligand>
</feature>